<sequence length="115" mass="12334">MSQNKKKGGQNKGANQQLNQLISALLRNAGQNKGKGQKKKKQPKLHFPMAGPSDLRHVMTPNEVQMCRSSLVTLFNQGGGQCTLVDSGGINFTVSFMLPTHATVRLINASANSSA</sequence>
<proteinExistence type="evidence at protein level"/>
<protein>
    <recommendedName>
        <fullName>Nucleoprotein</fullName>
    </recommendedName>
    <alternativeName>
        <fullName>Nucleocapsid protein</fullName>
        <shortName>Protein N</shortName>
    </alternativeName>
</protein>
<gene>
    <name type="primary">N</name>
    <name type="synonym">VP1</name>
    <name type="ORF">7</name>
</gene>
<evidence type="ECO:0000256" key="1">
    <source>
        <dbReference type="SAM" id="MobiDB-lite"/>
    </source>
</evidence>
<evidence type="ECO:0000269" key="2">
    <source>
    </source>
</evidence>
<evidence type="ECO:0000305" key="3"/>
<name>NCAP_LDV</name>
<keyword id="KW-0903">Direct protein sequencing</keyword>
<keyword id="KW-0687">Ribonucleoprotein</keyword>
<keyword id="KW-0694">RNA-binding</keyword>
<keyword id="KW-0543">Viral nucleoprotein</keyword>
<keyword id="KW-0946">Virion</keyword>
<accession>P0C779</accession>
<accession>P24122</accession>
<feature type="initiator methionine" description="Removed; by host" evidence="2">
    <location>
        <position position="1"/>
    </location>
</feature>
<feature type="chain" id="PRO_0000080873" description="Nucleoprotein">
    <location>
        <begin position="2"/>
        <end position="115"/>
    </location>
</feature>
<feature type="region of interest" description="Disordered" evidence="1">
    <location>
        <begin position="1"/>
        <end position="54"/>
    </location>
</feature>
<feature type="compositionally biased region" description="Low complexity" evidence="1">
    <location>
        <begin position="12"/>
        <end position="21"/>
    </location>
</feature>
<feature type="compositionally biased region" description="Basic residues" evidence="1">
    <location>
        <begin position="35"/>
        <end position="44"/>
    </location>
</feature>
<dbReference type="EMBL" id="M55296">
    <property type="protein sequence ID" value="AAA46272.1"/>
    <property type="molecule type" value="Genomic_RNA"/>
</dbReference>
<dbReference type="SMR" id="P0C779"/>
<dbReference type="GO" id="GO:1990904">
    <property type="term" value="C:ribonucleoprotein complex"/>
    <property type="evidence" value="ECO:0007669"/>
    <property type="project" value="UniProtKB-KW"/>
</dbReference>
<dbReference type="GO" id="GO:0019013">
    <property type="term" value="C:viral nucleocapsid"/>
    <property type="evidence" value="ECO:0007669"/>
    <property type="project" value="UniProtKB-KW"/>
</dbReference>
<dbReference type="GO" id="GO:0003723">
    <property type="term" value="F:RNA binding"/>
    <property type="evidence" value="ECO:0007669"/>
    <property type="project" value="UniProtKB-KW"/>
</dbReference>
<dbReference type="Gene3D" id="6.10.140.90">
    <property type="match status" value="1"/>
</dbReference>
<dbReference type="InterPro" id="IPR002484">
    <property type="entry name" value="Arte_nucleocap"/>
</dbReference>
<dbReference type="InterPro" id="IPR037179">
    <property type="entry name" value="Nucleocapsid_C"/>
</dbReference>
<dbReference type="Pfam" id="PF01481">
    <property type="entry name" value="Arteri_nucleo"/>
    <property type="match status" value="1"/>
</dbReference>
<dbReference type="SUPFAM" id="SSF103068">
    <property type="entry name" value="Nucleocapsid protein dimerization domain"/>
    <property type="match status" value="1"/>
</dbReference>
<comment type="subcellular location">
    <subcellularLocation>
        <location evidence="3">Virion</location>
    </subcellularLocation>
</comment>
<comment type="similarity">
    <text evidence="3">Belongs to the arteriviridae nucleocapsid family.</text>
</comment>
<reference key="1">
    <citation type="journal article" date="1990" name="Virology">
        <title>Map location of lactate dehydrogenase-elevating virus (LDV) capsid protein (Vp1) gene.</title>
        <authorList>
            <person name="Godeny E.K."/>
            <person name="Speicher D.W."/>
            <person name="Brinton M.A."/>
        </authorList>
    </citation>
    <scope>NUCLEOTIDE SEQUENCE [GENOMIC RNA]</scope>
    <scope>PROTEIN SEQUENCE OF 2-34</scope>
</reference>
<organism>
    <name type="scientific">Lactate dehydrogenase-elevating virus</name>
    <name type="common">LDV</name>
    <dbReference type="NCBI Taxonomy" id="11048"/>
    <lineage>
        <taxon>Viruses</taxon>
        <taxon>Riboviria</taxon>
        <taxon>Orthornavirae</taxon>
        <taxon>Pisuviricota</taxon>
        <taxon>Pisoniviricetes</taxon>
        <taxon>Nidovirales</taxon>
        <taxon>Arnidovirineae</taxon>
        <taxon>Arteriviridae</taxon>
        <taxon>Variarterivirinae</taxon>
        <taxon>Gammaarterivirus</taxon>
        <taxon>Gammaarterivirus lacdeh</taxon>
    </lineage>
</organism>
<organismHost>
    <name type="scientific">Mus musculus domesticus</name>
    <name type="common">western European house mouse</name>
    <dbReference type="NCBI Taxonomy" id="10092"/>
</organismHost>